<accession>Q3K7V8</accession>
<feature type="chain" id="PRO_0000225165" description="Crossover junction endodeoxyribonuclease RuvC">
    <location>
        <begin position="1"/>
        <end position="175"/>
    </location>
</feature>
<feature type="active site" evidence="1">
    <location>
        <position position="8"/>
    </location>
</feature>
<feature type="active site" evidence="1">
    <location>
        <position position="68"/>
    </location>
</feature>
<feature type="active site" evidence="1">
    <location>
        <position position="140"/>
    </location>
</feature>
<feature type="binding site" evidence="1">
    <location>
        <position position="8"/>
    </location>
    <ligand>
        <name>Mg(2+)</name>
        <dbReference type="ChEBI" id="CHEBI:18420"/>
        <label>1</label>
    </ligand>
</feature>
<feature type="binding site" evidence="1">
    <location>
        <position position="68"/>
    </location>
    <ligand>
        <name>Mg(2+)</name>
        <dbReference type="ChEBI" id="CHEBI:18420"/>
        <label>2</label>
    </ligand>
</feature>
<feature type="binding site" evidence="1">
    <location>
        <position position="140"/>
    </location>
    <ligand>
        <name>Mg(2+)</name>
        <dbReference type="ChEBI" id="CHEBI:18420"/>
        <label>1</label>
    </ligand>
</feature>
<proteinExistence type="inferred from homology"/>
<evidence type="ECO:0000255" key="1">
    <source>
        <dbReference type="HAMAP-Rule" id="MF_00034"/>
    </source>
</evidence>
<gene>
    <name evidence="1" type="primary">ruvC</name>
    <name type="ordered locus">Pfl01_4409</name>
</gene>
<protein>
    <recommendedName>
        <fullName evidence="1">Crossover junction endodeoxyribonuclease RuvC</fullName>
        <ecNumber evidence="1">3.1.21.10</ecNumber>
    </recommendedName>
    <alternativeName>
        <fullName evidence="1">Holliday junction nuclease RuvC</fullName>
    </alternativeName>
    <alternativeName>
        <fullName evidence="1">Holliday junction resolvase RuvC</fullName>
    </alternativeName>
</protein>
<reference key="1">
    <citation type="journal article" date="2009" name="Genome Biol.">
        <title>Genomic and genetic analyses of diversity and plant interactions of Pseudomonas fluorescens.</title>
        <authorList>
            <person name="Silby M.W."/>
            <person name="Cerdeno-Tarraga A.M."/>
            <person name="Vernikos G.S."/>
            <person name="Giddens S.R."/>
            <person name="Jackson R.W."/>
            <person name="Preston G.M."/>
            <person name="Zhang X.-X."/>
            <person name="Moon C.D."/>
            <person name="Gehrig S.M."/>
            <person name="Godfrey S.A.C."/>
            <person name="Knight C.G."/>
            <person name="Malone J.G."/>
            <person name="Robinson Z."/>
            <person name="Spiers A.J."/>
            <person name="Harris S."/>
            <person name="Challis G.L."/>
            <person name="Yaxley A.M."/>
            <person name="Harris D."/>
            <person name="Seeger K."/>
            <person name="Murphy L."/>
            <person name="Rutter S."/>
            <person name="Squares R."/>
            <person name="Quail M.A."/>
            <person name="Saunders E."/>
            <person name="Mavromatis K."/>
            <person name="Brettin T.S."/>
            <person name="Bentley S.D."/>
            <person name="Hothersall J."/>
            <person name="Stephens E."/>
            <person name="Thomas C.M."/>
            <person name="Parkhill J."/>
            <person name="Levy S.B."/>
            <person name="Rainey P.B."/>
            <person name="Thomson N.R."/>
        </authorList>
    </citation>
    <scope>NUCLEOTIDE SEQUENCE [LARGE SCALE GENOMIC DNA]</scope>
    <source>
        <strain>Pf0-1</strain>
    </source>
</reference>
<keyword id="KW-0963">Cytoplasm</keyword>
<keyword id="KW-0227">DNA damage</keyword>
<keyword id="KW-0233">DNA recombination</keyword>
<keyword id="KW-0234">DNA repair</keyword>
<keyword id="KW-0238">DNA-binding</keyword>
<keyword id="KW-0255">Endonuclease</keyword>
<keyword id="KW-0378">Hydrolase</keyword>
<keyword id="KW-0460">Magnesium</keyword>
<keyword id="KW-0479">Metal-binding</keyword>
<keyword id="KW-0540">Nuclease</keyword>
<dbReference type="EC" id="3.1.21.10" evidence="1"/>
<dbReference type="EMBL" id="CP000094">
    <property type="protein sequence ID" value="ABA76146.1"/>
    <property type="molecule type" value="Genomic_DNA"/>
</dbReference>
<dbReference type="RefSeq" id="WP_007951206.1">
    <property type="nucleotide sequence ID" value="NC_007492.2"/>
</dbReference>
<dbReference type="SMR" id="Q3K7V8"/>
<dbReference type="KEGG" id="pfo:Pfl01_4409"/>
<dbReference type="eggNOG" id="COG0817">
    <property type="taxonomic scope" value="Bacteria"/>
</dbReference>
<dbReference type="HOGENOM" id="CLU_091257_2_1_6"/>
<dbReference type="Proteomes" id="UP000002704">
    <property type="component" value="Chromosome"/>
</dbReference>
<dbReference type="GO" id="GO:0005737">
    <property type="term" value="C:cytoplasm"/>
    <property type="evidence" value="ECO:0007669"/>
    <property type="project" value="UniProtKB-SubCell"/>
</dbReference>
<dbReference type="GO" id="GO:0048476">
    <property type="term" value="C:Holliday junction resolvase complex"/>
    <property type="evidence" value="ECO:0007669"/>
    <property type="project" value="UniProtKB-UniRule"/>
</dbReference>
<dbReference type="GO" id="GO:0008821">
    <property type="term" value="F:crossover junction DNA endonuclease activity"/>
    <property type="evidence" value="ECO:0007669"/>
    <property type="project" value="UniProtKB-UniRule"/>
</dbReference>
<dbReference type="GO" id="GO:0003677">
    <property type="term" value="F:DNA binding"/>
    <property type="evidence" value="ECO:0007669"/>
    <property type="project" value="UniProtKB-KW"/>
</dbReference>
<dbReference type="GO" id="GO:0000287">
    <property type="term" value="F:magnesium ion binding"/>
    <property type="evidence" value="ECO:0007669"/>
    <property type="project" value="UniProtKB-UniRule"/>
</dbReference>
<dbReference type="GO" id="GO:0006310">
    <property type="term" value="P:DNA recombination"/>
    <property type="evidence" value="ECO:0007669"/>
    <property type="project" value="UniProtKB-UniRule"/>
</dbReference>
<dbReference type="GO" id="GO:0006281">
    <property type="term" value="P:DNA repair"/>
    <property type="evidence" value="ECO:0007669"/>
    <property type="project" value="UniProtKB-UniRule"/>
</dbReference>
<dbReference type="CDD" id="cd16962">
    <property type="entry name" value="RuvC"/>
    <property type="match status" value="1"/>
</dbReference>
<dbReference type="FunFam" id="3.30.420.10:FF:000002">
    <property type="entry name" value="Crossover junction endodeoxyribonuclease RuvC"/>
    <property type="match status" value="1"/>
</dbReference>
<dbReference type="Gene3D" id="3.30.420.10">
    <property type="entry name" value="Ribonuclease H-like superfamily/Ribonuclease H"/>
    <property type="match status" value="1"/>
</dbReference>
<dbReference type="HAMAP" id="MF_00034">
    <property type="entry name" value="RuvC"/>
    <property type="match status" value="1"/>
</dbReference>
<dbReference type="InterPro" id="IPR012337">
    <property type="entry name" value="RNaseH-like_sf"/>
</dbReference>
<dbReference type="InterPro" id="IPR036397">
    <property type="entry name" value="RNaseH_sf"/>
</dbReference>
<dbReference type="InterPro" id="IPR020563">
    <property type="entry name" value="X-over_junc_endoDNase_Mg_BS"/>
</dbReference>
<dbReference type="InterPro" id="IPR002176">
    <property type="entry name" value="X-over_junc_endoDNase_RuvC"/>
</dbReference>
<dbReference type="NCBIfam" id="TIGR00228">
    <property type="entry name" value="ruvC"/>
    <property type="match status" value="1"/>
</dbReference>
<dbReference type="PANTHER" id="PTHR30194">
    <property type="entry name" value="CROSSOVER JUNCTION ENDODEOXYRIBONUCLEASE RUVC"/>
    <property type="match status" value="1"/>
</dbReference>
<dbReference type="PANTHER" id="PTHR30194:SF3">
    <property type="entry name" value="CROSSOVER JUNCTION ENDODEOXYRIBONUCLEASE RUVC"/>
    <property type="match status" value="1"/>
</dbReference>
<dbReference type="Pfam" id="PF02075">
    <property type="entry name" value="RuvC"/>
    <property type="match status" value="1"/>
</dbReference>
<dbReference type="PRINTS" id="PR00696">
    <property type="entry name" value="RSOLVASERUVC"/>
</dbReference>
<dbReference type="SUPFAM" id="SSF53098">
    <property type="entry name" value="Ribonuclease H-like"/>
    <property type="match status" value="1"/>
</dbReference>
<dbReference type="PROSITE" id="PS01321">
    <property type="entry name" value="RUVC"/>
    <property type="match status" value="1"/>
</dbReference>
<organism>
    <name type="scientific">Pseudomonas fluorescens (strain Pf0-1)</name>
    <dbReference type="NCBI Taxonomy" id="205922"/>
    <lineage>
        <taxon>Bacteria</taxon>
        <taxon>Pseudomonadati</taxon>
        <taxon>Pseudomonadota</taxon>
        <taxon>Gammaproteobacteria</taxon>
        <taxon>Pseudomonadales</taxon>
        <taxon>Pseudomonadaceae</taxon>
        <taxon>Pseudomonas</taxon>
    </lineage>
</organism>
<name>RUVC_PSEPF</name>
<sequence length="175" mass="18531">MTLILGIDPGSRITGYGIVRDTGRGGCIYVASGCIRTGAGELHERLQIVYRGVREIIQTYGPVTMGIEKVFMAKNADSALKLGQARGAAIVAGAEESLEIAEYTATQVKQAVVGTGAANKEQVQMMVMHMLKLTSKPQIDASDALAIAICHAHTRSSLLPHGLGTARSRGGRLRL</sequence>
<comment type="function">
    <text evidence="1">The RuvA-RuvB-RuvC complex processes Holliday junction (HJ) DNA during genetic recombination and DNA repair. Endonuclease that resolves HJ intermediates. Cleaves cruciform DNA by making single-stranded nicks across the HJ at symmetrical positions within the homologous arms, yielding a 5'-phosphate and a 3'-hydroxyl group; requires a central core of homology in the junction. The consensus cleavage sequence is 5'-(A/T)TT(C/G)-3'. Cleavage occurs on the 3'-side of the TT dinucleotide at the point of strand exchange. HJ branch migration catalyzed by RuvA-RuvB allows RuvC to scan DNA until it finds its consensus sequence, where it cleaves and resolves the cruciform DNA.</text>
</comment>
<comment type="catalytic activity">
    <reaction evidence="1">
        <text>Endonucleolytic cleavage at a junction such as a reciprocal single-stranded crossover between two homologous DNA duplexes (Holliday junction).</text>
        <dbReference type="EC" id="3.1.21.10"/>
    </reaction>
</comment>
<comment type="cofactor">
    <cofactor evidence="1">
        <name>Mg(2+)</name>
        <dbReference type="ChEBI" id="CHEBI:18420"/>
    </cofactor>
    <text evidence="1">Binds 2 Mg(2+) ion per subunit.</text>
</comment>
<comment type="subunit">
    <text evidence="1">Homodimer which binds Holliday junction (HJ) DNA. The HJ becomes 2-fold symmetrical on binding to RuvC with unstacked arms; it has a different conformation from HJ DNA in complex with RuvA. In the full resolvosome a probable DNA-RuvA(4)-RuvB(12)-RuvC(2) complex forms which resolves the HJ.</text>
</comment>
<comment type="subcellular location">
    <subcellularLocation>
        <location evidence="1">Cytoplasm</location>
    </subcellularLocation>
</comment>
<comment type="similarity">
    <text evidence="1">Belongs to the RuvC family.</text>
</comment>